<dbReference type="EC" id="5.4.99.25" evidence="1"/>
<dbReference type="EMBL" id="CP000896">
    <property type="protein sequence ID" value="ABX81426.1"/>
    <property type="molecule type" value="Genomic_DNA"/>
</dbReference>
<dbReference type="RefSeq" id="WP_012242757.1">
    <property type="nucleotide sequence ID" value="NC_010163.1"/>
</dbReference>
<dbReference type="SMR" id="A9NGE6"/>
<dbReference type="STRING" id="441768.ACL_0812"/>
<dbReference type="GeneID" id="41338968"/>
<dbReference type="KEGG" id="acl:ACL_0812"/>
<dbReference type="eggNOG" id="COG0130">
    <property type="taxonomic scope" value="Bacteria"/>
</dbReference>
<dbReference type="HOGENOM" id="CLU_032087_0_2_14"/>
<dbReference type="OrthoDB" id="9802309at2"/>
<dbReference type="Proteomes" id="UP000008558">
    <property type="component" value="Chromosome"/>
</dbReference>
<dbReference type="GO" id="GO:0003723">
    <property type="term" value="F:RNA binding"/>
    <property type="evidence" value="ECO:0007669"/>
    <property type="project" value="InterPro"/>
</dbReference>
<dbReference type="GO" id="GO:0160148">
    <property type="term" value="F:tRNA pseudouridine(55) synthase activity"/>
    <property type="evidence" value="ECO:0007669"/>
    <property type="project" value="UniProtKB-EC"/>
</dbReference>
<dbReference type="GO" id="GO:1990481">
    <property type="term" value="P:mRNA pseudouridine synthesis"/>
    <property type="evidence" value="ECO:0007669"/>
    <property type="project" value="TreeGrafter"/>
</dbReference>
<dbReference type="GO" id="GO:0031119">
    <property type="term" value="P:tRNA pseudouridine synthesis"/>
    <property type="evidence" value="ECO:0007669"/>
    <property type="project" value="UniProtKB-UniRule"/>
</dbReference>
<dbReference type="CDD" id="cd02573">
    <property type="entry name" value="PseudoU_synth_EcTruB"/>
    <property type="match status" value="1"/>
</dbReference>
<dbReference type="Gene3D" id="3.30.2350.10">
    <property type="entry name" value="Pseudouridine synthase"/>
    <property type="match status" value="1"/>
</dbReference>
<dbReference type="HAMAP" id="MF_01080">
    <property type="entry name" value="TruB_bact"/>
    <property type="match status" value="1"/>
</dbReference>
<dbReference type="InterPro" id="IPR020103">
    <property type="entry name" value="PsdUridine_synth_cat_dom_sf"/>
</dbReference>
<dbReference type="InterPro" id="IPR002501">
    <property type="entry name" value="PsdUridine_synth_N"/>
</dbReference>
<dbReference type="InterPro" id="IPR014780">
    <property type="entry name" value="tRNA_psdUridine_synth_TruB"/>
</dbReference>
<dbReference type="NCBIfam" id="TIGR00431">
    <property type="entry name" value="TruB"/>
    <property type="match status" value="1"/>
</dbReference>
<dbReference type="PANTHER" id="PTHR13767:SF2">
    <property type="entry name" value="PSEUDOURIDYLATE SYNTHASE TRUB1"/>
    <property type="match status" value="1"/>
</dbReference>
<dbReference type="PANTHER" id="PTHR13767">
    <property type="entry name" value="TRNA-PSEUDOURIDINE SYNTHASE"/>
    <property type="match status" value="1"/>
</dbReference>
<dbReference type="Pfam" id="PF01509">
    <property type="entry name" value="TruB_N"/>
    <property type="match status" value="1"/>
</dbReference>
<dbReference type="SUPFAM" id="SSF55120">
    <property type="entry name" value="Pseudouridine synthase"/>
    <property type="match status" value="1"/>
</dbReference>
<gene>
    <name evidence="1" type="primary">truB</name>
    <name type="ordered locus">ACL_0812</name>
</gene>
<name>TRUB_ACHLI</name>
<accession>A9NGE6</accession>
<proteinExistence type="inferred from homology"/>
<evidence type="ECO:0000255" key="1">
    <source>
        <dbReference type="HAMAP-Rule" id="MF_01080"/>
    </source>
</evidence>
<organism>
    <name type="scientific">Acholeplasma laidlawii (strain PG-8A)</name>
    <dbReference type="NCBI Taxonomy" id="441768"/>
    <lineage>
        <taxon>Bacteria</taxon>
        <taxon>Bacillati</taxon>
        <taxon>Mycoplasmatota</taxon>
        <taxon>Mollicutes</taxon>
        <taxon>Acholeplasmatales</taxon>
        <taxon>Acholeplasmataceae</taxon>
        <taxon>Acholeplasma</taxon>
    </lineage>
</organism>
<feature type="chain" id="PRO_1000084540" description="tRNA pseudouridine synthase B">
    <location>
        <begin position="1"/>
        <end position="279"/>
    </location>
</feature>
<feature type="active site" description="Nucleophile" evidence="1">
    <location>
        <position position="38"/>
    </location>
</feature>
<keyword id="KW-0413">Isomerase</keyword>
<keyword id="KW-1185">Reference proteome</keyword>
<keyword id="KW-0819">tRNA processing</keyword>
<protein>
    <recommendedName>
        <fullName evidence="1">tRNA pseudouridine synthase B</fullName>
        <ecNumber evidence="1">5.4.99.25</ecNumber>
    </recommendedName>
    <alternativeName>
        <fullName evidence="1">tRNA pseudouridine(55) synthase</fullName>
        <shortName evidence="1">Psi55 synthase</shortName>
    </alternativeName>
    <alternativeName>
        <fullName evidence="1">tRNA pseudouridylate synthase</fullName>
    </alternativeName>
    <alternativeName>
        <fullName evidence="1">tRNA-uridine isomerase</fullName>
    </alternativeName>
</protein>
<comment type="function">
    <text evidence="1">Responsible for synthesis of pseudouridine from uracil-55 in the psi GC loop of transfer RNAs.</text>
</comment>
<comment type="catalytic activity">
    <reaction evidence="1">
        <text>uridine(55) in tRNA = pseudouridine(55) in tRNA</text>
        <dbReference type="Rhea" id="RHEA:42532"/>
        <dbReference type="Rhea" id="RHEA-COMP:10101"/>
        <dbReference type="Rhea" id="RHEA-COMP:10102"/>
        <dbReference type="ChEBI" id="CHEBI:65314"/>
        <dbReference type="ChEBI" id="CHEBI:65315"/>
        <dbReference type="EC" id="5.4.99.25"/>
    </reaction>
</comment>
<comment type="similarity">
    <text evidence="1">Belongs to the pseudouridine synthase TruB family. Type 1 subfamily.</text>
</comment>
<reference key="1">
    <citation type="journal article" date="2011" name="J. Bacteriol.">
        <title>Complete genome and proteome of Acholeplasma laidlawii.</title>
        <authorList>
            <person name="Lazarev V.N."/>
            <person name="Levitskii S.A."/>
            <person name="Basovskii Y.I."/>
            <person name="Chukin M.M."/>
            <person name="Akopian T.A."/>
            <person name="Vereshchagin V.V."/>
            <person name="Kostrjukova E.S."/>
            <person name="Kovaleva G.Y."/>
            <person name="Kazanov M.D."/>
            <person name="Malko D.B."/>
            <person name="Vitreschak A.G."/>
            <person name="Sernova N.V."/>
            <person name="Gelfand M.S."/>
            <person name="Demina I.A."/>
            <person name="Serebryakova M.V."/>
            <person name="Galyamina M.A."/>
            <person name="Vtyurin N.N."/>
            <person name="Rogov S.I."/>
            <person name="Alexeev D.G."/>
            <person name="Ladygina V.G."/>
            <person name="Govorun V.M."/>
        </authorList>
    </citation>
    <scope>NUCLEOTIDE SEQUENCE [LARGE SCALE GENOMIC DNA]</scope>
    <source>
        <strain>PG-8A</strain>
    </source>
</reference>
<sequence>MNGIFLVNKKAGLTSHDIVYQIRKKFNIKKVGHTGTLDPFATGLLIILVGKATKLAFLFDELDKQYDGTIVLGKSYDTDDTTGEVINEAPVSFTEDDLKAILNRIVPTYKQIPPSYSAIKKAGVKAYEAARSGKPLDLPAREVSIYNFTYQINKQTIDFSTHVSKGTYIRSIARDIGLGLNTFGALSVLNRTNIDAYSQNMSKTVEDTELPDLIDHALLFEGVKKIVLNDYLIKLVKNGVVLDERQTTLNEPFIVQDEMGNYIAYYVPDNQQYKLKYLF</sequence>